<feature type="chain" id="PRO_0000070262" description="Protein DGCR6">
    <location>
        <begin position="1"/>
        <end position="200"/>
    </location>
</feature>
<feature type="coiled-coil region" evidence="1">
    <location>
        <begin position="116"/>
        <end position="146"/>
    </location>
</feature>
<feature type="coiled-coil region" evidence="1">
    <location>
        <begin position="176"/>
        <end position="198"/>
    </location>
</feature>
<evidence type="ECO:0000255" key="1"/>
<evidence type="ECO:0000305" key="2"/>
<dbReference type="EMBL" id="AF048985">
    <property type="protein sequence ID" value="AAC05142.1"/>
    <property type="molecule type" value="mRNA"/>
</dbReference>
<dbReference type="RefSeq" id="NP_990371.1">
    <property type="nucleotide sequence ID" value="NM_205040.2"/>
</dbReference>
<dbReference type="SMR" id="O73770"/>
<dbReference type="FunCoup" id="O73770">
    <property type="interactions" value="10"/>
</dbReference>
<dbReference type="STRING" id="9031.ENSGALP00000063916"/>
<dbReference type="PaxDb" id="9031-ENSGALP00000042890"/>
<dbReference type="Ensembl" id="ENSGALT00010000924.1">
    <property type="protein sequence ID" value="ENSGALP00010000488.1"/>
    <property type="gene ID" value="ENSGALG00010000442.1"/>
</dbReference>
<dbReference type="GeneID" id="395907"/>
<dbReference type="KEGG" id="gga:395907"/>
<dbReference type="CTD" id="8214"/>
<dbReference type="VEuPathDB" id="HostDB:geneid_395907"/>
<dbReference type="eggNOG" id="KOG4810">
    <property type="taxonomic scope" value="Eukaryota"/>
</dbReference>
<dbReference type="GeneTree" id="ENSGT00390000017663"/>
<dbReference type="HOGENOM" id="CLU_096921_1_1_1"/>
<dbReference type="InParanoid" id="O73770"/>
<dbReference type="OMA" id="CVLNESI"/>
<dbReference type="OrthoDB" id="21617at2759"/>
<dbReference type="PhylomeDB" id="O73770"/>
<dbReference type="TreeFam" id="TF324608"/>
<dbReference type="PRO" id="PR:O73770"/>
<dbReference type="Proteomes" id="UP000000539">
    <property type="component" value="Chromosome 15"/>
</dbReference>
<dbReference type="Bgee" id="ENSGALG00000027369">
    <property type="expression patterns" value="Expressed in heart and 13 other cell types or tissues"/>
</dbReference>
<dbReference type="InterPro" id="IPR010849">
    <property type="entry name" value="Gonadal"/>
</dbReference>
<dbReference type="PANTHER" id="PTHR13054">
    <property type="entry name" value="DIGEORGE SYNDROME CRITICAL REGION 6 DGCR6 FAMILY MEMBER"/>
    <property type="match status" value="1"/>
</dbReference>
<dbReference type="PANTHER" id="PTHR13054:SF2">
    <property type="entry name" value="PROTEIN DGCR6"/>
    <property type="match status" value="1"/>
</dbReference>
<dbReference type="Pfam" id="PF07324">
    <property type="entry name" value="DGCR6"/>
    <property type="match status" value="1"/>
</dbReference>
<accession>O73770</accession>
<keyword id="KW-0175">Coiled coil</keyword>
<keyword id="KW-1185">Reference proteome</keyword>
<sequence length="200" mass="23243">MERFGGAGYEVAAAELSRQQERHYRLLSELQELVKALPSSCQQRLSYTTLSDLALALLDGTVFEIVQGLLEIQHLTEKNLYSQRLKLHSEHRGLKQELFHRHKEAQQCCRPHNLPLLRAAQQREMEAVEQRIREEQRMMDEKIVLELDQKVIDQQSTLEKAGVSGFYITTNPQELTLQMNLLELIRKLQQKESESEKAFS</sequence>
<name>DGCR6_CHICK</name>
<protein>
    <recommendedName>
        <fullName>Protein DGCR6</fullName>
    </recommendedName>
    <alternativeName>
        <fullName>DiGeorge syndrome critical region 6 homolog</fullName>
    </alternativeName>
</protein>
<comment type="similarity">
    <text evidence="2">Belongs to the gonadal family.</text>
</comment>
<organism>
    <name type="scientific">Gallus gallus</name>
    <name type="common">Chicken</name>
    <dbReference type="NCBI Taxonomy" id="9031"/>
    <lineage>
        <taxon>Eukaryota</taxon>
        <taxon>Metazoa</taxon>
        <taxon>Chordata</taxon>
        <taxon>Craniata</taxon>
        <taxon>Vertebrata</taxon>
        <taxon>Euteleostomi</taxon>
        <taxon>Archelosauria</taxon>
        <taxon>Archosauria</taxon>
        <taxon>Dinosauria</taxon>
        <taxon>Saurischia</taxon>
        <taxon>Theropoda</taxon>
        <taxon>Coelurosauria</taxon>
        <taxon>Aves</taxon>
        <taxon>Neognathae</taxon>
        <taxon>Galloanserae</taxon>
        <taxon>Galliformes</taxon>
        <taxon>Phasianidae</taxon>
        <taxon>Phasianinae</taxon>
        <taxon>Gallus</taxon>
    </lineage>
</organism>
<proteinExistence type="evidence at transcript level"/>
<gene>
    <name type="primary">DGCR6</name>
</gene>
<reference key="1">
    <citation type="submission" date="1998-02" db="EMBL/GenBank/DDBJ databases">
        <authorList>
            <person name="Hierck B.P."/>
            <person name="Poelmann R.E."/>
            <person name="Gittenberger-De Groot A.C."/>
        </authorList>
    </citation>
    <scope>NUCLEOTIDE SEQUENCE [MRNA]</scope>
    <source>
        <strain>Broiler</strain>
        <tissue>Heart</tissue>
    </source>
</reference>